<accession>Q9SUX7</accession>
<reference key="1">
    <citation type="journal article" date="1999" name="Nature">
        <title>Sequence and analysis of chromosome 4 of the plant Arabidopsis thaliana.</title>
        <authorList>
            <person name="Mayer K.F.X."/>
            <person name="Schueller C."/>
            <person name="Wambutt R."/>
            <person name="Murphy G."/>
            <person name="Volckaert G."/>
            <person name="Pohl T."/>
            <person name="Duesterhoeft A."/>
            <person name="Stiekema W."/>
            <person name="Entian K.-D."/>
            <person name="Terryn N."/>
            <person name="Harris B."/>
            <person name="Ansorge W."/>
            <person name="Brandt P."/>
            <person name="Grivell L.A."/>
            <person name="Rieger M."/>
            <person name="Weichselgartner M."/>
            <person name="de Simone V."/>
            <person name="Obermaier B."/>
            <person name="Mache R."/>
            <person name="Mueller M."/>
            <person name="Kreis M."/>
            <person name="Delseny M."/>
            <person name="Puigdomenech P."/>
            <person name="Watson M."/>
            <person name="Schmidtheini T."/>
            <person name="Reichert B."/>
            <person name="Portetelle D."/>
            <person name="Perez-Alonso M."/>
            <person name="Boutry M."/>
            <person name="Bancroft I."/>
            <person name="Vos P."/>
            <person name="Hoheisel J."/>
            <person name="Zimmermann W."/>
            <person name="Wedler H."/>
            <person name="Ridley P."/>
            <person name="Langham S.-A."/>
            <person name="McCullagh B."/>
            <person name="Bilham L."/>
            <person name="Robben J."/>
            <person name="van der Schueren J."/>
            <person name="Grymonprez B."/>
            <person name="Chuang Y.-J."/>
            <person name="Vandenbussche F."/>
            <person name="Braeken M."/>
            <person name="Weltjens I."/>
            <person name="Voet M."/>
            <person name="Bastiaens I."/>
            <person name="Aert R."/>
            <person name="Defoor E."/>
            <person name="Weitzenegger T."/>
            <person name="Bothe G."/>
            <person name="Ramsperger U."/>
            <person name="Hilbert H."/>
            <person name="Braun M."/>
            <person name="Holzer E."/>
            <person name="Brandt A."/>
            <person name="Peters S."/>
            <person name="van Staveren M."/>
            <person name="Dirkse W."/>
            <person name="Mooijman P."/>
            <person name="Klein Lankhorst R."/>
            <person name="Rose M."/>
            <person name="Hauf J."/>
            <person name="Koetter P."/>
            <person name="Berneiser S."/>
            <person name="Hempel S."/>
            <person name="Feldpausch M."/>
            <person name="Lamberth S."/>
            <person name="Van den Daele H."/>
            <person name="De Keyser A."/>
            <person name="Buysshaert C."/>
            <person name="Gielen J."/>
            <person name="Villarroel R."/>
            <person name="De Clercq R."/>
            <person name="van Montagu M."/>
            <person name="Rogers J."/>
            <person name="Cronin A."/>
            <person name="Quail M.A."/>
            <person name="Bray-Allen S."/>
            <person name="Clark L."/>
            <person name="Doggett J."/>
            <person name="Hall S."/>
            <person name="Kay M."/>
            <person name="Lennard N."/>
            <person name="McLay K."/>
            <person name="Mayes R."/>
            <person name="Pettett A."/>
            <person name="Rajandream M.A."/>
            <person name="Lyne M."/>
            <person name="Benes V."/>
            <person name="Rechmann S."/>
            <person name="Borkova D."/>
            <person name="Bloecker H."/>
            <person name="Scharfe M."/>
            <person name="Grimm M."/>
            <person name="Loehnert T.-H."/>
            <person name="Dose S."/>
            <person name="de Haan M."/>
            <person name="Maarse A.C."/>
            <person name="Schaefer M."/>
            <person name="Mueller-Auer S."/>
            <person name="Gabel C."/>
            <person name="Fuchs M."/>
            <person name="Fartmann B."/>
            <person name="Granderath K."/>
            <person name="Dauner D."/>
            <person name="Herzl A."/>
            <person name="Neumann S."/>
            <person name="Argiriou A."/>
            <person name="Vitale D."/>
            <person name="Liguori R."/>
            <person name="Piravandi E."/>
            <person name="Massenet O."/>
            <person name="Quigley F."/>
            <person name="Clabauld G."/>
            <person name="Muendlein A."/>
            <person name="Felber R."/>
            <person name="Schnabl S."/>
            <person name="Hiller R."/>
            <person name="Schmidt W."/>
            <person name="Lecharny A."/>
            <person name="Aubourg S."/>
            <person name="Chefdor F."/>
            <person name="Cooke R."/>
            <person name="Berger C."/>
            <person name="Monfort A."/>
            <person name="Casacuberta E."/>
            <person name="Gibbons T."/>
            <person name="Weber N."/>
            <person name="Vandenbol M."/>
            <person name="Bargues M."/>
            <person name="Terol J."/>
            <person name="Torres A."/>
            <person name="Perez-Perez A."/>
            <person name="Purnelle B."/>
            <person name="Bent E."/>
            <person name="Johnson S."/>
            <person name="Tacon D."/>
            <person name="Jesse T."/>
            <person name="Heijnen L."/>
            <person name="Schwarz S."/>
            <person name="Scholler P."/>
            <person name="Heber S."/>
            <person name="Francs P."/>
            <person name="Bielke C."/>
            <person name="Frishman D."/>
            <person name="Haase D."/>
            <person name="Lemcke K."/>
            <person name="Mewes H.-W."/>
            <person name="Stocker S."/>
            <person name="Zaccaria P."/>
            <person name="Bevan M."/>
            <person name="Wilson R.K."/>
            <person name="de la Bastide M."/>
            <person name="Habermann K."/>
            <person name="Parnell L."/>
            <person name="Dedhia N."/>
            <person name="Gnoj L."/>
            <person name="Schutz K."/>
            <person name="Huang E."/>
            <person name="Spiegel L."/>
            <person name="Sekhon M."/>
            <person name="Murray J."/>
            <person name="Sheet P."/>
            <person name="Cordes M."/>
            <person name="Abu-Threideh J."/>
            <person name="Stoneking T."/>
            <person name="Kalicki J."/>
            <person name="Graves T."/>
            <person name="Harmon G."/>
            <person name="Edwards J."/>
            <person name="Latreille P."/>
            <person name="Courtney L."/>
            <person name="Cloud J."/>
            <person name="Abbott A."/>
            <person name="Scott K."/>
            <person name="Johnson D."/>
            <person name="Minx P."/>
            <person name="Bentley D."/>
            <person name="Fulton B."/>
            <person name="Miller N."/>
            <person name="Greco T."/>
            <person name="Kemp K."/>
            <person name="Kramer J."/>
            <person name="Fulton L."/>
            <person name="Mardis E."/>
            <person name="Dante M."/>
            <person name="Pepin K."/>
            <person name="Hillier L.W."/>
            <person name="Nelson J."/>
            <person name="Spieth J."/>
            <person name="Ryan E."/>
            <person name="Andrews S."/>
            <person name="Geisel C."/>
            <person name="Layman D."/>
            <person name="Du H."/>
            <person name="Ali J."/>
            <person name="Berghoff A."/>
            <person name="Jones K."/>
            <person name="Drone K."/>
            <person name="Cotton M."/>
            <person name="Joshu C."/>
            <person name="Antonoiu B."/>
            <person name="Zidanic M."/>
            <person name="Strong C."/>
            <person name="Sun H."/>
            <person name="Lamar B."/>
            <person name="Yordan C."/>
            <person name="Ma P."/>
            <person name="Zhong J."/>
            <person name="Preston R."/>
            <person name="Vil D."/>
            <person name="Shekher M."/>
            <person name="Matero A."/>
            <person name="Shah R."/>
            <person name="Swaby I.K."/>
            <person name="O'Shaughnessy A."/>
            <person name="Rodriguez M."/>
            <person name="Hoffman J."/>
            <person name="Till S."/>
            <person name="Granat S."/>
            <person name="Shohdy N."/>
            <person name="Hasegawa A."/>
            <person name="Hameed A."/>
            <person name="Lodhi M."/>
            <person name="Johnson A."/>
            <person name="Chen E."/>
            <person name="Marra M.A."/>
            <person name="Martienssen R."/>
            <person name="McCombie W.R."/>
        </authorList>
    </citation>
    <scope>NUCLEOTIDE SEQUENCE [LARGE SCALE GENOMIC DNA]</scope>
    <source>
        <strain>cv. Columbia</strain>
    </source>
</reference>
<reference key="2">
    <citation type="journal article" date="2017" name="Plant J.">
        <title>Araport11: a complete reannotation of the Arabidopsis thaliana reference genome.</title>
        <authorList>
            <person name="Cheng C.Y."/>
            <person name="Krishnakumar V."/>
            <person name="Chan A.P."/>
            <person name="Thibaud-Nissen F."/>
            <person name="Schobel S."/>
            <person name="Town C.D."/>
        </authorList>
    </citation>
    <scope>GENOME REANNOTATION</scope>
    <source>
        <strain>cv. Columbia</strain>
    </source>
</reference>
<name>FB245_ARATH</name>
<gene>
    <name type="ordered locus">At4g22420</name>
    <name type="ORF">F7K2.9</name>
</gene>
<sequence>MAECPTDLINEMFLRLRATTLKKCRVLSKPCFSLIDSPEKRVIERSDSPPPPLGFNNHLLPLANAYDDDDEEEGNELKKSQARRNGVAKGEGNGNKVNGEAQEEVDDEEDDDDDASKGRGKHSRHVEVRRDCPYLDTVNRQVIIIDQFLMLRVPLATMRKRMRTGGRKAKAMEKYLKKVLKKSG</sequence>
<proteinExistence type="predicted"/>
<protein>
    <recommendedName>
        <fullName>Putative F-box protein At4g22420</fullName>
    </recommendedName>
</protein>
<keyword id="KW-1185">Reference proteome</keyword>
<dbReference type="EMBL" id="AL033545">
    <property type="protein sequence ID" value="CAB52816.1"/>
    <property type="molecule type" value="Genomic_DNA"/>
</dbReference>
<dbReference type="EMBL" id="AL161557">
    <property type="protein sequence ID" value="CAB79197.1"/>
    <property type="molecule type" value="Genomic_DNA"/>
</dbReference>
<dbReference type="EMBL" id="CP002687">
    <property type="status" value="NOT_ANNOTATED_CDS"/>
    <property type="molecule type" value="Genomic_DNA"/>
</dbReference>
<dbReference type="PIR" id="G85256">
    <property type="entry name" value="G85256"/>
</dbReference>
<dbReference type="BioGRID" id="13626">
    <property type="interactions" value="6"/>
</dbReference>
<dbReference type="STRING" id="3702.Q9SUX7"/>
<dbReference type="PaxDb" id="3702-AT4G22420.1"/>
<dbReference type="Araport" id="AT4G22420"/>
<dbReference type="TAIR" id="AT4G22420"/>
<dbReference type="eggNOG" id="KOG2026">
    <property type="taxonomic scope" value="Eukaryota"/>
</dbReference>
<dbReference type="HOGENOM" id="CLU_1470153_0_0_1"/>
<dbReference type="InParanoid" id="Q9SUX7"/>
<dbReference type="PhylomeDB" id="Q9SUX7"/>
<dbReference type="PRO" id="PR:Q9SUX7"/>
<dbReference type="Proteomes" id="UP000006548">
    <property type="component" value="Chromosome 4"/>
</dbReference>
<dbReference type="ExpressionAtlas" id="Q9SUX7">
    <property type="expression patterns" value="baseline and differential"/>
</dbReference>
<organism>
    <name type="scientific">Arabidopsis thaliana</name>
    <name type="common">Mouse-ear cress</name>
    <dbReference type="NCBI Taxonomy" id="3702"/>
    <lineage>
        <taxon>Eukaryota</taxon>
        <taxon>Viridiplantae</taxon>
        <taxon>Streptophyta</taxon>
        <taxon>Embryophyta</taxon>
        <taxon>Tracheophyta</taxon>
        <taxon>Spermatophyta</taxon>
        <taxon>Magnoliopsida</taxon>
        <taxon>eudicotyledons</taxon>
        <taxon>Gunneridae</taxon>
        <taxon>Pentapetalae</taxon>
        <taxon>rosids</taxon>
        <taxon>malvids</taxon>
        <taxon>Brassicales</taxon>
        <taxon>Brassicaceae</taxon>
        <taxon>Camelineae</taxon>
        <taxon>Arabidopsis</taxon>
    </lineage>
</organism>
<feature type="chain" id="PRO_0000283512" description="Putative F-box protein At4g22420">
    <location>
        <begin position="1"/>
        <end position="184"/>
    </location>
</feature>
<feature type="domain" description="F-box">
    <location>
        <begin position="1"/>
        <end position="46"/>
    </location>
</feature>
<feature type="region of interest" description="Disordered" evidence="1">
    <location>
        <begin position="68"/>
        <end position="126"/>
    </location>
</feature>
<feature type="compositionally biased region" description="Low complexity" evidence="1">
    <location>
        <begin position="85"/>
        <end position="100"/>
    </location>
</feature>
<feature type="compositionally biased region" description="Acidic residues" evidence="1">
    <location>
        <begin position="101"/>
        <end position="114"/>
    </location>
</feature>
<evidence type="ECO:0000256" key="1">
    <source>
        <dbReference type="SAM" id="MobiDB-lite"/>
    </source>
</evidence>